<accession>Q8Z412</accession>
<feature type="chain" id="PRO_0000141013" description="Thymidylate synthase">
    <location>
        <begin position="1"/>
        <end position="264"/>
    </location>
</feature>
<feature type="active site" description="Nucleophile" evidence="1">
    <location>
        <position position="146"/>
    </location>
</feature>
<feature type="binding site" description="in other chain" evidence="1">
    <location>
        <position position="21"/>
    </location>
    <ligand>
        <name>dUMP</name>
        <dbReference type="ChEBI" id="CHEBI:246422"/>
        <note>ligand shared between dimeric partners</note>
    </ligand>
</feature>
<feature type="binding site" evidence="1">
    <location>
        <position position="51"/>
    </location>
    <ligand>
        <name>(6R)-5,10-methylene-5,6,7,8-tetrahydrofolate</name>
        <dbReference type="ChEBI" id="CHEBI:15636"/>
    </ligand>
</feature>
<feature type="binding site" evidence="1">
    <location>
        <begin position="126"/>
        <end position="127"/>
    </location>
    <ligand>
        <name>dUMP</name>
        <dbReference type="ChEBI" id="CHEBI:246422"/>
        <note>ligand shared between dimeric partners</note>
    </ligand>
</feature>
<feature type="binding site" description="in other chain" evidence="1">
    <location>
        <begin position="166"/>
        <end position="169"/>
    </location>
    <ligand>
        <name>dUMP</name>
        <dbReference type="ChEBI" id="CHEBI:246422"/>
        <note>ligand shared between dimeric partners</note>
    </ligand>
</feature>
<feature type="binding site" evidence="1">
    <location>
        <position position="169"/>
    </location>
    <ligand>
        <name>(6R)-5,10-methylene-5,6,7,8-tetrahydrofolate</name>
        <dbReference type="ChEBI" id="CHEBI:15636"/>
    </ligand>
</feature>
<feature type="binding site" description="in other chain" evidence="1">
    <location>
        <position position="177"/>
    </location>
    <ligand>
        <name>dUMP</name>
        <dbReference type="ChEBI" id="CHEBI:246422"/>
        <note>ligand shared between dimeric partners</note>
    </ligand>
</feature>
<feature type="binding site" description="in other chain" evidence="1">
    <location>
        <begin position="207"/>
        <end position="209"/>
    </location>
    <ligand>
        <name>dUMP</name>
        <dbReference type="ChEBI" id="CHEBI:246422"/>
        <note>ligand shared between dimeric partners</note>
    </ligand>
</feature>
<feature type="binding site" evidence="1">
    <location>
        <position position="263"/>
    </location>
    <ligand>
        <name>(6R)-5,10-methylene-5,6,7,8-tetrahydrofolate</name>
        <dbReference type="ChEBI" id="CHEBI:15636"/>
    </ligand>
</feature>
<dbReference type="EC" id="2.1.1.45" evidence="1"/>
<dbReference type="EMBL" id="AL513382">
    <property type="protein sequence ID" value="CAD02826.1"/>
    <property type="molecule type" value="Genomic_DNA"/>
</dbReference>
<dbReference type="EMBL" id="AE014613">
    <property type="protein sequence ID" value="AAO70464.1"/>
    <property type="molecule type" value="Genomic_DNA"/>
</dbReference>
<dbReference type="RefSeq" id="NP_457395.1">
    <property type="nucleotide sequence ID" value="NC_003198.1"/>
</dbReference>
<dbReference type="RefSeq" id="WP_000816222.1">
    <property type="nucleotide sequence ID" value="NZ_WSUR01000055.1"/>
</dbReference>
<dbReference type="SMR" id="Q8Z412"/>
<dbReference type="STRING" id="220341.gene:17587026"/>
<dbReference type="KEGG" id="stt:t2910"/>
<dbReference type="KEGG" id="sty:STY3142"/>
<dbReference type="PATRIC" id="fig|220341.7.peg.3197"/>
<dbReference type="eggNOG" id="COG0207">
    <property type="taxonomic scope" value="Bacteria"/>
</dbReference>
<dbReference type="HOGENOM" id="CLU_021669_0_0_6"/>
<dbReference type="OMA" id="AYGRFWR"/>
<dbReference type="OrthoDB" id="9774633at2"/>
<dbReference type="UniPathway" id="UPA00575"/>
<dbReference type="Proteomes" id="UP000000541">
    <property type="component" value="Chromosome"/>
</dbReference>
<dbReference type="Proteomes" id="UP000002670">
    <property type="component" value="Chromosome"/>
</dbReference>
<dbReference type="GO" id="GO:0005829">
    <property type="term" value="C:cytosol"/>
    <property type="evidence" value="ECO:0007669"/>
    <property type="project" value="TreeGrafter"/>
</dbReference>
<dbReference type="GO" id="GO:0004799">
    <property type="term" value="F:thymidylate synthase activity"/>
    <property type="evidence" value="ECO:0007669"/>
    <property type="project" value="UniProtKB-UniRule"/>
</dbReference>
<dbReference type="GO" id="GO:0006231">
    <property type="term" value="P:dTMP biosynthetic process"/>
    <property type="evidence" value="ECO:0007669"/>
    <property type="project" value="UniProtKB-UniRule"/>
</dbReference>
<dbReference type="GO" id="GO:0006235">
    <property type="term" value="P:dTTP biosynthetic process"/>
    <property type="evidence" value="ECO:0007669"/>
    <property type="project" value="UniProtKB-UniRule"/>
</dbReference>
<dbReference type="GO" id="GO:0032259">
    <property type="term" value="P:methylation"/>
    <property type="evidence" value="ECO:0007669"/>
    <property type="project" value="UniProtKB-KW"/>
</dbReference>
<dbReference type="CDD" id="cd00351">
    <property type="entry name" value="TS_Pyrimidine_HMase"/>
    <property type="match status" value="1"/>
</dbReference>
<dbReference type="FunFam" id="3.30.572.10:FF:000001">
    <property type="entry name" value="Thymidylate synthase"/>
    <property type="match status" value="1"/>
</dbReference>
<dbReference type="Gene3D" id="3.30.572.10">
    <property type="entry name" value="Thymidylate synthase/dCMP hydroxymethylase domain"/>
    <property type="match status" value="1"/>
</dbReference>
<dbReference type="HAMAP" id="MF_00008">
    <property type="entry name" value="Thymidy_synth_bact"/>
    <property type="match status" value="1"/>
</dbReference>
<dbReference type="InterPro" id="IPR045097">
    <property type="entry name" value="Thymidate_synth/dCMP_Mease"/>
</dbReference>
<dbReference type="InterPro" id="IPR023451">
    <property type="entry name" value="Thymidate_synth/dCMP_Mease_dom"/>
</dbReference>
<dbReference type="InterPro" id="IPR036926">
    <property type="entry name" value="Thymidate_synth/dCMP_Mease_sf"/>
</dbReference>
<dbReference type="InterPro" id="IPR000398">
    <property type="entry name" value="Thymidylate_synthase"/>
</dbReference>
<dbReference type="InterPro" id="IPR020940">
    <property type="entry name" value="Thymidylate_synthase_AS"/>
</dbReference>
<dbReference type="NCBIfam" id="NF002497">
    <property type="entry name" value="PRK01827.1-3"/>
    <property type="match status" value="1"/>
</dbReference>
<dbReference type="NCBIfam" id="NF002499">
    <property type="entry name" value="PRK01827.1-5"/>
    <property type="match status" value="1"/>
</dbReference>
<dbReference type="NCBIfam" id="TIGR03284">
    <property type="entry name" value="thym_sym"/>
    <property type="match status" value="2"/>
</dbReference>
<dbReference type="PANTHER" id="PTHR11548:SF9">
    <property type="entry name" value="THYMIDYLATE SYNTHASE"/>
    <property type="match status" value="1"/>
</dbReference>
<dbReference type="PANTHER" id="PTHR11548">
    <property type="entry name" value="THYMIDYLATE SYNTHASE 1"/>
    <property type="match status" value="1"/>
</dbReference>
<dbReference type="Pfam" id="PF00303">
    <property type="entry name" value="Thymidylat_synt"/>
    <property type="match status" value="1"/>
</dbReference>
<dbReference type="PRINTS" id="PR00108">
    <property type="entry name" value="THYMDSNTHASE"/>
</dbReference>
<dbReference type="SUPFAM" id="SSF55831">
    <property type="entry name" value="Thymidylate synthase/dCMP hydroxymethylase"/>
    <property type="match status" value="1"/>
</dbReference>
<dbReference type="PROSITE" id="PS00091">
    <property type="entry name" value="THYMIDYLATE_SYNTHASE"/>
    <property type="match status" value="1"/>
</dbReference>
<evidence type="ECO:0000255" key="1">
    <source>
        <dbReference type="HAMAP-Rule" id="MF_00008"/>
    </source>
</evidence>
<protein>
    <recommendedName>
        <fullName evidence="1">Thymidylate synthase</fullName>
        <shortName evidence="1">TS</shortName>
        <shortName evidence="1">TSase</shortName>
        <ecNumber evidence="1">2.1.1.45</ecNumber>
    </recommendedName>
</protein>
<comment type="function">
    <text evidence="1">Catalyzes the reductive methylation of 2'-deoxyuridine-5'-monophosphate (dUMP) to 2'-deoxythymidine-5'-monophosphate (dTMP) while utilizing 5,10-methylenetetrahydrofolate (mTHF) as the methyl donor and reductant in the reaction, yielding dihydrofolate (DHF) as a by-product. This enzymatic reaction provides an intracellular de novo source of dTMP, an essential precursor for DNA biosynthesis.</text>
</comment>
<comment type="catalytic activity">
    <reaction evidence="1">
        <text>dUMP + (6R)-5,10-methylene-5,6,7,8-tetrahydrofolate = 7,8-dihydrofolate + dTMP</text>
        <dbReference type="Rhea" id="RHEA:12104"/>
        <dbReference type="ChEBI" id="CHEBI:15636"/>
        <dbReference type="ChEBI" id="CHEBI:57451"/>
        <dbReference type="ChEBI" id="CHEBI:63528"/>
        <dbReference type="ChEBI" id="CHEBI:246422"/>
        <dbReference type="EC" id="2.1.1.45"/>
    </reaction>
</comment>
<comment type="pathway">
    <text evidence="1">Pyrimidine metabolism; dTTP biosynthesis.</text>
</comment>
<comment type="subunit">
    <text evidence="1">Homodimer.</text>
</comment>
<comment type="subcellular location">
    <subcellularLocation>
        <location evidence="1">Cytoplasm</location>
    </subcellularLocation>
</comment>
<comment type="similarity">
    <text evidence="1">Belongs to the thymidylate synthase family. Bacterial-type ThyA subfamily.</text>
</comment>
<name>TYSY_SALTI</name>
<keyword id="KW-0963">Cytoplasm</keyword>
<keyword id="KW-0489">Methyltransferase</keyword>
<keyword id="KW-0545">Nucleotide biosynthesis</keyword>
<keyword id="KW-0808">Transferase</keyword>
<sequence length="264" mass="30336">MKQYLELIQKVLDEGTQKNDRTGTGTLSIFGHQMRFNLLEGFPLVTTKRCHLRSIIHELLWFLQGDTNIAYLHENNVTIWDEWADENGDLGPVYGKQWRAWPTPDGRHIDQIATVLSQLKNDPDSRRIIVSAWNVGELDKMALAPCHAFFQFYVADGKLSCQLYQRSCDVFLGLPFNIASYALLVHMMAQQCDLDVGDFVWTGGDTHLYSNHMEQTHLQLSREPRALPKLVIKRKPDSLFDYRFDDFEIEGYDPHPGIKAPVAI</sequence>
<proteinExistence type="inferred from homology"/>
<gene>
    <name evidence="1" type="primary">thyA</name>
    <name type="ordered locus">STY3142</name>
    <name type="ordered locus">t2910</name>
</gene>
<organism>
    <name type="scientific">Salmonella typhi</name>
    <dbReference type="NCBI Taxonomy" id="90370"/>
    <lineage>
        <taxon>Bacteria</taxon>
        <taxon>Pseudomonadati</taxon>
        <taxon>Pseudomonadota</taxon>
        <taxon>Gammaproteobacteria</taxon>
        <taxon>Enterobacterales</taxon>
        <taxon>Enterobacteriaceae</taxon>
        <taxon>Salmonella</taxon>
    </lineage>
</organism>
<reference key="1">
    <citation type="journal article" date="2001" name="Nature">
        <title>Complete genome sequence of a multiple drug resistant Salmonella enterica serovar Typhi CT18.</title>
        <authorList>
            <person name="Parkhill J."/>
            <person name="Dougan G."/>
            <person name="James K.D."/>
            <person name="Thomson N.R."/>
            <person name="Pickard D."/>
            <person name="Wain J."/>
            <person name="Churcher C.M."/>
            <person name="Mungall K.L."/>
            <person name="Bentley S.D."/>
            <person name="Holden M.T.G."/>
            <person name="Sebaihia M."/>
            <person name="Baker S."/>
            <person name="Basham D."/>
            <person name="Brooks K."/>
            <person name="Chillingworth T."/>
            <person name="Connerton P."/>
            <person name="Cronin A."/>
            <person name="Davis P."/>
            <person name="Davies R.M."/>
            <person name="Dowd L."/>
            <person name="White N."/>
            <person name="Farrar J."/>
            <person name="Feltwell T."/>
            <person name="Hamlin N."/>
            <person name="Haque A."/>
            <person name="Hien T.T."/>
            <person name="Holroyd S."/>
            <person name="Jagels K."/>
            <person name="Krogh A."/>
            <person name="Larsen T.S."/>
            <person name="Leather S."/>
            <person name="Moule S."/>
            <person name="O'Gaora P."/>
            <person name="Parry C."/>
            <person name="Quail M.A."/>
            <person name="Rutherford K.M."/>
            <person name="Simmonds M."/>
            <person name="Skelton J."/>
            <person name="Stevens K."/>
            <person name="Whitehead S."/>
            <person name="Barrell B.G."/>
        </authorList>
    </citation>
    <scope>NUCLEOTIDE SEQUENCE [LARGE SCALE GENOMIC DNA]</scope>
    <source>
        <strain>CT18</strain>
    </source>
</reference>
<reference key="2">
    <citation type="journal article" date="2003" name="J. Bacteriol.">
        <title>Comparative genomics of Salmonella enterica serovar Typhi strains Ty2 and CT18.</title>
        <authorList>
            <person name="Deng W."/>
            <person name="Liou S.-R."/>
            <person name="Plunkett G. III"/>
            <person name="Mayhew G.F."/>
            <person name="Rose D.J."/>
            <person name="Burland V."/>
            <person name="Kodoyianni V."/>
            <person name="Schwartz D.C."/>
            <person name="Blattner F.R."/>
        </authorList>
    </citation>
    <scope>NUCLEOTIDE SEQUENCE [LARGE SCALE GENOMIC DNA]</scope>
    <source>
        <strain>ATCC 700931 / Ty2</strain>
    </source>
</reference>